<dbReference type="EC" id="3.6.1.-" evidence="1"/>
<dbReference type="EMBL" id="CP000891">
    <property type="protein sequence ID" value="ABX48436.1"/>
    <property type="molecule type" value="Genomic_DNA"/>
</dbReference>
<dbReference type="RefSeq" id="WP_006080762.1">
    <property type="nucleotide sequence ID" value="NC_009997.1"/>
</dbReference>
<dbReference type="SMR" id="A9L5L9"/>
<dbReference type="GeneID" id="11771531"/>
<dbReference type="KEGG" id="sbn:Sbal195_1261"/>
<dbReference type="HOGENOM" id="CLU_087195_3_1_6"/>
<dbReference type="Proteomes" id="UP000000770">
    <property type="component" value="Chromosome"/>
</dbReference>
<dbReference type="GO" id="GO:0005737">
    <property type="term" value="C:cytoplasm"/>
    <property type="evidence" value="ECO:0007669"/>
    <property type="project" value="TreeGrafter"/>
</dbReference>
<dbReference type="GO" id="GO:0034353">
    <property type="term" value="F:mRNA 5'-diphosphatase activity"/>
    <property type="evidence" value="ECO:0007669"/>
    <property type="project" value="TreeGrafter"/>
</dbReference>
<dbReference type="GO" id="GO:0006402">
    <property type="term" value="P:mRNA catabolic process"/>
    <property type="evidence" value="ECO:0007669"/>
    <property type="project" value="TreeGrafter"/>
</dbReference>
<dbReference type="CDD" id="cd03671">
    <property type="entry name" value="NUDIX_Ap4A_hydrolase_plant_like"/>
    <property type="match status" value="1"/>
</dbReference>
<dbReference type="FunFam" id="3.90.79.10:FF:000001">
    <property type="entry name" value="RNA pyrophosphohydrolase"/>
    <property type="match status" value="1"/>
</dbReference>
<dbReference type="Gene3D" id="3.90.79.10">
    <property type="entry name" value="Nucleoside Triphosphate Pyrophosphohydrolase"/>
    <property type="match status" value="1"/>
</dbReference>
<dbReference type="HAMAP" id="MF_00298">
    <property type="entry name" value="Nudix_RppH"/>
    <property type="match status" value="1"/>
</dbReference>
<dbReference type="InterPro" id="IPR020476">
    <property type="entry name" value="Nudix_hydrolase"/>
</dbReference>
<dbReference type="InterPro" id="IPR015797">
    <property type="entry name" value="NUDIX_hydrolase-like_dom_sf"/>
</dbReference>
<dbReference type="InterPro" id="IPR020084">
    <property type="entry name" value="NUDIX_hydrolase_CS"/>
</dbReference>
<dbReference type="InterPro" id="IPR000086">
    <property type="entry name" value="NUDIX_hydrolase_dom"/>
</dbReference>
<dbReference type="InterPro" id="IPR022927">
    <property type="entry name" value="RppH"/>
</dbReference>
<dbReference type="NCBIfam" id="NF001934">
    <property type="entry name" value="PRK00714.1-1"/>
    <property type="match status" value="1"/>
</dbReference>
<dbReference type="NCBIfam" id="NF001937">
    <property type="entry name" value="PRK00714.1-4"/>
    <property type="match status" value="1"/>
</dbReference>
<dbReference type="NCBIfam" id="NF001938">
    <property type="entry name" value="PRK00714.1-5"/>
    <property type="match status" value="1"/>
</dbReference>
<dbReference type="PANTHER" id="PTHR23114">
    <property type="entry name" value="M7GPPPN-MRNA HYDROLASE"/>
    <property type="match status" value="1"/>
</dbReference>
<dbReference type="PANTHER" id="PTHR23114:SF17">
    <property type="entry name" value="M7GPPPN-MRNA HYDROLASE"/>
    <property type="match status" value="1"/>
</dbReference>
<dbReference type="Pfam" id="PF00293">
    <property type="entry name" value="NUDIX"/>
    <property type="match status" value="1"/>
</dbReference>
<dbReference type="PRINTS" id="PR00502">
    <property type="entry name" value="NUDIXFAMILY"/>
</dbReference>
<dbReference type="SUPFAM" id="SSF55811">
    <property type="entry name" value="Nudix"/>
    <property type="match status" value="1"/>
</dbReference>
<dbReference type="PROSITE" id="PS51462">
    <property type="entry name" value="NUDIX"/>
    <property type="match status" value="1"/>
</dbReference>
<dbReference type="PROSITE" id="PS00893">
    <property type="entry name" value="NUDIX_BOX"/>
    <property type="match status" value="1"/>
</dbReference>
<proteinExistence type="inferred from homology"/>
<protein>
    <recommendedName>
        <fullName evidence="1">RNA pyrophosphohydrolase</fullName>
        <ecNumber evidence="1">3.6.1.-</ecNumber>
    </recommendedName>
    <alternativeName>
        <fullName evidence="1">(Di)nucleoside polyphosphate hydrolase</fullName>
    </alternativeName>
</protein>
<name>RPPH_SHEB9</name>
<accession>A9L5L9</accession>
<feature type="chain" id="PRO_1000078976" description="RNA pyrophosphohydrolase">
    <location>
        <begin position="1"/>
        <end position="174"/>
    </location>
</feature>
<feature type="domain" description="Nudix hydrolase" evidence="1">
    <location>
        <begin position="6"/>
        <end position="149"/>
    </location>
</feature>
<feature type="short sequence motif" description="Nudix box">
    <location>
        <begin position="38"/>
        <end position="59"/>
    </location>
</feature>
<sequence length="174" mass="20574">MIDSDGFRANVGIIICNRYGQVMWARRFGQHSWQFPQGGVDDGETAEEAMYRELYEEVGLRPEHVHILTSTRSWLRYRLPKRLVRQDSKPVCIGQKQKWFLLQLKSQDSAINLSSSGHPEFDDWRWVSYWYPVRQVVSFKRDVYRKVMKEFAVTALSFQTLEIPRKRGRQKTTG</sequence>
<evidence type="ECO:0000255" key="1">
    <source>
        <dbReference type="HAMAP-Rule" id="MF_00298"/>
    </source>
</evidence>
<comment type="function">
    <text evidence="1">Accelerates the degradation of transcripts by removing pyrophosphate from the 5'-end of triphosphorylated RNA, leading to a more labile monophosphorylated state that can stimulate subsequent ribonuclease cleavage.</text>
</comment>
<comment type="cofactor">
    <cofactor evidence="1">
        <name>a divalent metal cation</name>
        <dbReference type="ChEBI" id="CHEBI:60240"/>
    </cofactor>
</comment>
<comment type="similarity">
    <text evidence="1">Belongs to the Nudix hydrolase family. RppH subfamily.</text>
</comment>
<reference key="1">
    <citation type="submission" date="2007-11" db="EMBL/GenBank/DDBJ databases">
        <title>Complete sequence of chromosome of Shewanella baltica OS195.</title>
        <authorList>
            <consortium name="US DOE Joint Genome Institute"/>
            <person name="Copeland A."/>
            <person name="Lucas S."/>
            <person name="Lapidus A."/>
            <person name="Barry K."/>
            <person name="Glavina del Rio T."/>
            <person name="Dalin E."/>
            <person name="Tice H."/>
            <person name="Pitluck S."/>
            <person name="Chain P."/>
            <person name="Malfatti S."/>
            <person name="Shin M."/>
            <person name="Vergez L."/>
            <person name="Schmutz J."/>
            <person name="Larimer F."/>
            <person name="Land M."/>
            <person name="Hauser L."/>
            <person name="Kyrpides N."/>
            <person name="Kim E."/>
            <person name="Brettar I."/>
            <person name="Rodrigues J."/>
            <person name="Konstantinidis K."/>
            <person name="Klappenbach J."/>
            <person name="Hofle M."/>
            <person name="Tiedje J."/>
            <person name="Richardson P."/>
        </authorList>
    </citation>
    <scope>NUCLEOTIDE SEQUENCE [LARGE SCALE GENOMIC DNA]</scope>
    <source>
        <strain>OS195</strain>
    </source>
</reference>
<keyword id="KW-0378">Hydrolase</keyword>
<gene>
    <name evidence="1" type="primary">rppH</name>
    <name evidence="1" type="synonym">nudH</name>
    <name type="ordered locus">Sbal195_1261</name>
</gene>
<organism>
    <name type="scientific">Shewanella baltica (strain OS195)</name>
    <dbReference type="NCBI Taxonomy" id="399599"/>
    <lineage>
        <taxon>Bacteria</taxon>
        <taxon>Pseudomonadati</taxon>
        <taxon>Pseudomonadota</taxon>
        <taxon>Gammaproteobacteria</taxon>
        <taxon>Alteromonadales</taxon>
        <taxon>Shewanellaceae</taxon>
        <taxon>Shewanella</taxon>
    </lineage>
</organism>